<name>THTR_MYCTU</name>
<sequence length="277" mass="31015">MARCDVLVSADWAESNLHAPKVVFVEVDEDTSAYDRDHIAGAIKLDWRTDLQDPVKRDFVDAQQFSKLLSERGIANEDTVILYGGNNNWFAAYAYWYFKLYGHEKVKLLDGGRKKWELDGRPLSSDPVSRPVTSYTASPPDNTIRAFRDEVLAAINVKNLIDVRSPDEFSGKILAPAHLPQEQSQRPGHIPGAINVPWSRAANEDGTFKSDEELAKLYADAGLDNSKETIAYCRIGERSSHTWFVLRELLGHQNVKNYDGSWTEYGSLVGAPIELGS</sequence>
<organism>
    <name type="scientific">Mycobacterium tuberculosis (strain ATCC 25618 / H37Rv)</name>
    <dbReference type="NCBI Taxonomy" id="83332"/>
    <lineage>
        <taxon>Bacteria</taxon>
        <taxon>Bacillati</taxon>
        <taxon>Actinomycetota</taxon>
        <taxon>Actinomycetes</taxon>
        <taxon>Mycobacteriales</taxon>
        <taxon>Mycobacteriaceae</taxon>
        <taxon>Mycobacterium</taxon>
        <taxon>Mycobacterium tuberculosis complex</taxon>
    </lineage>
</organism>
<evidence type="ECO:0000250" key="1"/>
<evidence type="ECO:0000255" key="2">
    <source>
        <dbReference type="PROSITE-ProRule" id="PRU00173"/>
    </source>
</evidence>
<evidence type="ECO:0007829" key="3">
    <source>
        <dbReference type="PDB" id="3AAX"/>
    </source>
</evidence>
<evidence type="ECO:0007829" key="4">
    <source>
        <dbReference type="PDB" id="3AAY"/>
    </source>
</evidence>
<keyword id="KW-0002">3D-structure</keyword>
<keyword id="KW-1185">Reference proteome</keyword>
<keyword id="KW-0677">Repeat</keyword>
<keyword id="KW-0808">Transferase</keyword>
<reference key="1">
    <citation type="journal article" date="1998" name="Nature">
        <title>Deciphering the biology of Mycobacterium tuberculosis from the complete genome sequence.</title>
        <authorList>
            <person name="Cole S.T."/>
            <person name="Brosch R."/>
            <person name="Parkhill J."/>
            <person name="Garnier T."/>
            <person name="Churcher C.M."/>
            <person name="Harris D.E."/>
            <person name="Gordon S.V."/>
            <person name="Eiglmeier K."/>
            <person name="Gas S."/>
            <person name="Barry C.E. III"/>
            <person name="Tekaia F."/>
            <person name="Badcock K."/>
            <person name="Basham D."/>
            <person name="Brown D."/>
            <person name="Chillingworth T."/>
            <person name="Connor R."/>
            <person name="Davies R.M."/>
            <person name="Devlin K."/>
            <person name="Feltwell T."/>
            <person name="Gentles S."/>
            <person name="Hamlin N."/>
            <person name="Holroyd S."/>
            <person name="Hornsby T."/>
            <person name="Jagels K."/>
            <person name="Krogh A."/>
            <person name="McLean J."/>
            <person name="Moule S."/>
            <person name="Murphy L.D."/>
            <person name="Oliver S."/>
            <person name="Osborne J."/>
            <person name="Quail M.A."/>
            <person name="Rajandream M.A."/>
            <person name="Rogers J."/>
            <person name="Rutter S."/>
            <person name="Seeger K."/>
            <person name="Skelton S."/>
            <person name="Squares S."/>
            <person name="Squares R."/>
            <person name="Sulston J.E."/>
            <person name="Taylor K."/>
            <person name="Whitehead S."/>
            <person name="Barrell B.G."/>
        </authorList>
    </citation>
    <scope>NUCLEOTIDE SEQUENCE [LARGE SCALE GENOMIC DNA]</scope>
    <source>
        <strain>ATCC 25618 / H37Rv</strain>
    </source>
</reference>
<reference key="2">
    <citation type="journal article" date="2011" name="Mol. Cell. Proteomics">
        <title>Proteogenomic analysis of Mycobacterium tuberculosis by high resolution mass spectrometry.</title>
        <authorList>
            <person name="Kelkar D.S."/>
            <person name="Kumar D."/>
            <person name="Kumar P."/>
            <person name="Balakrishnan L."/>
            <person name="Muthusamy B."/>
            <person name="Yadav A.K."/>
            <person name="Shrivastava P."/>
            <person name="Marimuthu A."/>
            <person name="Anand S."/>
            <person name="Sundaram H."/>
            <person name="Kingsbury R."/>
            <person name="Harsha H.C."/>
            <person name="Nair B."/>
            <person name="Prasad T.S."/>
            <person name="Chauhan D.S."/>
            <person name="Katoch K."/>
            <person name="Katoch V.M."/>
            <person name="Kumar P."/>
            <person name="Chaerkady R."/>
            <person name="Ramachandran S."/>
            <person name="Dash D."/>
            <person name="Pandey A."/>
        </authorList>
    </citation>
    <scope>IDENTIFICATION BY MASS SPECTROMETRY [LARGE SCALE ANALYSIS]</scope>
    <source>
        <strain>ATCC 25618 / H37Rv</strain>
    </source>
</reference>
<dbReference type="EC" id="2.8.1.1"/>
<dbReference type="EMBL" id="AL123456">
    <property type="protein sequence ID" value="CCP43563.1"/>
    <property type="molecule type" value="Genomic_DNA"/>
</dbReference>
<dbReference type="EMBL" id="AL123456">
    <property type="protein sequence ID" value="CCP45927.1"/>
    <property type="molecule type" value="Genomic_DNA"/>
</dbReference>
<dbReference type="PIR" id="G70809">
    <property type="entry name" value="G70809"/>
</dbReference>
<dbReference type="RefSeq" id="NP_215330.1">
    <property type="nucleotide sequence ID" value="NC_000962.3"/>
</dbReference>
<dbReference type="RefSeq" id="WP_003404293.1">
    <property type="nucleotide sequence ID" value="NZ_NVQJ01000118.1"/>
</dbReference>
<dbReference type="PDB" id="3AAX">
    <property type="method" value="X-ray"/>
    <property type="resolution" value="2.50 A"/>
    <property type="chains" value="A/B=1-277"/>
</dbReference>
<dbReference type="PDB" id="3AAY">
    <property type="method" value="X-ray"/>
    <property type="resolution" value="1.90 A"/>
    <property type="chains" value="A/B=1-277"/>
</dbReference>
<dbReference type="PDB" id="3HWI">
    <property type="method" value="X-ray"/>
    <property type="resolution" value="2.29 A"/>
    <property type="chains" value="A/B=1-277"/>
</dbReference>
<dbReference type="PDBsum" id="3AAX"/>
<dbReference type="PDBsum" id="3AAY"/>
<dbReference type="PDBsum" id="3HWI"/>
<dbReference type="SMR" id="P9WHF9"/>
<dbReference type="FunCoup" id="P9WHF9">
    <property type="interactions" value="229"/>
</dbReference>
<dbReference type="STRING" id="83332.Rv0815c"/>
<dbReference type="PaxDb" id="83332-Rv0815c"/>
<dbReference type="DNASU" id="23493067"/>
<dbReference type="DNASU" id="885449"/>
<dbReference type="DNASU" id="888802"/>
<dbReference type="GeneID" id="885449"/>
<dbReference type="KEGG" id="mtu:Rv0815c"/>
<dbReference type="KEGG" id="mtu:Rv3117"/>
<dbReference type="KEGG" id="mtv:RVBD_0815c"/>
<dbReference type="KEGG" id="mtv:RVBD_3117"/>
<dbReference type="TubercuList" id="Rv0815c"/>
<dbReference type="eggNOG" id="COG2897">
    <property type="taxonomic scope" value="Bacteria"/>
</dbReference>
<dbReference type="InParanoid" id="P9WHF9"/>
<dbReference type="OrthoDB" id="9781034at2"/>
<dbReference type="PhylomeDB" id="P9WHF9"/>
<dbReference type="BRENDA" id="2.8.1.1">
    <property type="organism ID" value="3445"/>
</dbReference>
<dbReference type="BRENDA" id="2.8.1.2">
    <property type="organism ID" value="3445"/>
</dbReference>
<dbReference type="EvolutionaryTrace" id="P9WHF9"/>
<dbReference type="Proteomes" id="UP000001584">
    <property type="component" value="Chromosome"/>
</dbReference>
<dbReference type="GO" id="GO:0005829">
    <property type="term" value="C:cytosol"/>
    <property type="evidence" value="ECO:0007005"/>
    <property type="project" value="MTBBASE"/>
</dbReference>
<dbReference type="GO" id="GO:0009274">
    <property type="term" value="C:peptidoglycan-based cell wall"/>
    <property type="evidence" value="ECO:0007005"/>
    <property type="project" value="MTBBASE"/>
</dbReference>
<dbReference type="GO" id="GO:0005886">
    <property type="term" value="C:plasma membrane"/>
    <property type="evidence" value="ECO:0007005"/>
    <property type="project" value="MTBBASE"/>
</dbReference>
<dbReference type="GO" id="GO:0004792">
    <property type="term" value="F:thiosulfate-cyanide sulfurtransferase activity"/>
    <property type="evidence" value="ECO:0007669"/>
    <property type="project" value="UniProtKB-EC"/>
</dbReference>
<dbReference type="CDD" id="cd01448">
    <property type="entry name" value="TST_Repeat_1"/>
    <property type="match status" value="1"/>
</dbReference>
<dbReference type="CDD" id="cd01449">
    <property type="entry name" value="TST_Repeat_2"/>
    <property type="match status" value="1"/>
</dbReference>
<dbReference type="FunFam" id="3.40.250.10:FF:000024">
    <property type="entry name" value="Sulfurtransferase"/>
    <property type="match status" value="1"/>
</dbReference>
<dbReference type="Gene3D" id="3.40.250.10">
    <property type="entry name" value="Rhodanese-like domain"/>
    <property type="match status" value="2"/>
</dbReference>
<dbReference type="InterPro" id="IPR001763">
    <property type="entry name" value="Rhodanese-like_dom"/>
</dbReference>
<dbReference type="InterPro" id="IPR036873">
    <property type="entry name" value="Rhodanese-like_dom_sf"/>
</dbReference>
<dbReference type="InterPro" id="IPR051126">
    <property type="entry name" value="Thiosulfate_sulfurtransferase"/>
</dbReference>
<dbReference type="InterPro" id="IPR001307">
    <property type="entry name" value="Thiosulphate_STrfase_CS"/>
</dbReference>
<dbReference type="PANTHER" id="PTHR43855">
    <property type="entry name" value="THIOSULFATE SULFURTRANSFERASE"/>
    <property type="match status" value="1"/>
</dbReference>
<dbReference type="PANTHER" id="PTHR43855:SF1">
    <property type="entry name" value="THIOSULFATE SULFURTRANSFERASE"/>
    <property type="match status" value="1"/>
</dbReference>
<dbReference type="Pfam" id="PF00581">
    <property type="entry name" value="Rhodanese"/>
    <property type="match status" value="2"/>
</dbReference>
<dbReference type="SMART" id="SM00450">
    <property type="entry name" value="RHOD"/>
    <property type="match status" value="2"/>
</dbReference>
<dbReference type="SUPFAM" id="SSF52821">
    <property type="entry name" value="Rhodanese/Cell cycle control phosphatase"/>
    <property type="match status" value="2"/>
</dbReference>
<dbReference type="PROSITE" id="PS00683">
    <property type="entry name" value="RHODANESE_2"/>
    <property type="match status" value="1"/>
</dbReference>
<dbReference type="PROSITE" id="PS50206">
    <property type="entry name" value="RHODANESE_3"/>
    <property type="match status" value="2"/>
</dbReference>
<comment type="function">
    <text evidence="1">May be a sulfotransferase involved in the formation of thiosulfate.</text>
</comment>
<comment type="catalytic activity">
    <reaction>
        <text>thiosulfate + hydrogen cyanide = thiocyanate + sulfite + 2 H(+)</text>
        <dbReference type="Rhea" id="RHEA:16881"/>
        <dbReference type="ChEBI" id="CHEBI:15378"/>
        <dbReference type="ChEBI" id="CHEBI:17359"/>
        <dbReference type="ChEBI" id="CHEBI:18022"/>
        <dbReference type="ChEBI" id="CHEBI:18407"/>
        <dbReference type="ChEBI" id="CHEBI:33542"/>
        <dbReference type="EC" id="2.8.1.1"/>
    </reaction>
</comment>
<comment type="domain">
    <text evidence="1">Contains two rhodanese domains with different primary structures but with near identical secondary structure conformations suggesting a common evolutionary origin. Only the C-terminal rhodanese domain contains the catalytic cysteine residue (By similarity).</text>
</comment>
<accession>P9WHF9</accession>
<accession>L0TBW4</accession>
<accession>O05793</accession>
<protein>
    <recommendedName>
        <fullName>Putative thiosulfate sulfurtransferase</fullName>
        <ecNumber>2.8.1.1</ecNumber>
    </recommendedName>
    <alternativeName>
        <fullName>Rhodanese-like protein</fullName>
    </alternativeName>
</protein>
<feature type="chain" id="PRO_0000139415" description="Putative thiosulfate sulfurtransferase">
    <location>
        <begin position="1"/>
        <end position="277"/>
    </location>
</feature>
<feature type="domain" description="Rhodanese 1" evidence="2">
    <location>
        <begin position="18"/>
        <end position="125"/>
    </location>
</feature>
<feature type="domain" description="Rhodanese 2" evidence="2">
    <location>
        <begin position="154"/>
        <end position="274"/>
    </location>
</feature>
<feature type="active site" description="Cysteine persulfide intermediate" evidence="2">
    <location>
        <position position="233"/>
    </location>
</feature>
<feature type="binding site" evidence="1">
    <location>
        <position position="238"/>
    </location>
    <ligand>
        <name>substrate</name>
    </ligand>
</feature>
<feature type="helix" evidence="4">
    <location>
        <begin position="3"/>
        <end position="6"/>
    </location>
</feature>
<feature type="helix" evidence="4">
    <location>
        <begin position="10"/>
        <end position="14"/>
    </location>
</feature>
<feature type="turn" evidence="4">
    <location>
        <begin position="15"/>
        <end position="18"/>
    </location>
</feature>
<feature type="strand" evidence="4">
    <location>
        <begin position="22"/>
        <end position="31"/>
    </location>
</feature>
<feature type="helix" evidence="4">
    <location>
        <begin position="32"/>
        <end position="36"/>
    </location>
</feature>
<feature type="strand" evidence="4">
    <location>
        <begin position="43"/>
        <end position="46"/>
    </location>
</feature>
<feature type="turn" evidence="4">
    <location>
        <begin position="47"/>
        <end position="51"/>
    </location>
</feature>
<feature type="strand" evidence="4">
    <location>
        <begin position="54"/>
        <end position="59"/>
    </location>
</feature>
<feature type="helix" evidence="4">
    <location>
        <begin position="62"/>
        <end position="72"/>
    </location>
</feature>
<feature type="strand" evidence="4">
    <location>
        <begin position="78"/>
        <end position="83"/>
    </location>
</feature>
<feature type="helix" evidence="4">
    <location>
        <begin position="86"/>
        <end position="88"/>
    </location>
</feature>
<feature type="helix" evidence="4">
    <location>
        <begin position="89"/>
        <end position="100"/>
    </location>
</feature>
<feature type="strand" evidence="4">
    <location>
        <begin position="105"/>
        <end position="109"/>
    </location>
</feature>
<feature type="helix" evidence="4">
    <location>
        <begin position="112"/>
        <end position="118"/>
    </location>
</feature>
<feature type="helix" evidence="4">
    <location>
        <begin position="142"/>
        <end position="144"/>
    </location>
</feature>
<feature type="helix" evidence="4">
    <location>
        <begin position="148"/>
        <end position="153"/>
    </location>
</feature>
<feature type="turn" evidence="4">
    <location>
        <begin position="154"/>
        <end position="157"/>
    </location>
</feature>
<feature type="strand" evidence="4">
    <location>
        <begin position="158"/>
        <end position="162"/>
    </location>
</feature>
<feature type="helix" evidence="4">
    <location>
        <begin position="166"/>
        <end position="169"/>
    </location>
</feature>
<feature type="strand" evidence="3">
    <location>
        <begin position="174"/>
        <end position="177"/>
    </location>
</feature>
<feature type="strand" evidence="3">
    <location>
        <begin position="184"/>
        <end position="186"/>
    </location>
</feature>
<feature type="helix" evidence="4">
    <location>
        <begin position="198"/>
        <end position="201"/>
    </location>
</feature>
<feature type="helix" evidence="4">
    <location>
        <begin position="211"/>
        <end position="221"/>
    </location>
</feature>
<feature type="strand" evidence="4">
    <location>
        <begin position="229"/>
        <end position="232"/>
    </location>
</feature>
<feature type="helix" evidence="4">
    <location>
        <begin position="236"/>
        <end position="247"/>
    </location>
</feature>
<feature type="strand" evidence="4">
    <location>
        <begin position="255"/>
        <end position="260"/>
    </location>
</feature>
<feature type="helix" evidence="4">
    <location>
        <begin position="261"/>
        <end position="265"/>
    </location>
</feature>
<gene>
    <name type="primary">cysA1</name>
    <name type="synonym">cysA</name>
    <name type="ordered locus">Rv3117</name>
    <name type="ORF">MTCY164.27</name>
</gene>
<gene>
    <name type="primary">cysA2</name>
    <name type="ordered locus">Rv0815c</name>
    <name type="ORF">MTV043.07c</name>
</gene>
<proteinExistence type="evidence at protein level"/>